<accession>Q9A1B6</accession>
<accession>Q490P5</accession>
<feature type="chain" id="PRO_0000178242" description="dITP/XTP pyrophosphatase">
    <location>
        <begin position="1"/>
        <end position="328"/>
    </location>
</feature>
<feature type="region of interest" description="Unknown">
    <location>
        <begin position="1"/>
        <end position="129"/>
    </location>
</feature>
<feature type="region of interest" description="NTP pyrophosphatase">
    <location>
        <begin position="130"/>
        <end position="324"/>
    </location>
</feature>
<feature type="active site" description="Proton acceptor" evidence="1">
    <location>
        <position position="196"/>
    </location>
</feature>
<feature type="binding site" evidence="1">
    <location>
        <begin position="134"/>
        <end position="139"/>
    </location>
    <ligand>
        <name>substrate</name>
    </ligand>
</feature>
<feature type="binding site" evidence="1">
    <location>
        <position position="196"/>
    </location>
    <ligand>
        <name>Mg(2+)</name>
        <dbReference type="ChEBI" id="CHEBI:18420"/>
    </ligand>
</feature>
<feature type="binding site" evidence="1">
    <location>
        <position position="197"/>
    </location>
    <ligand>
        <name>substrate</name>
    </ligand>
</feature>
<feature type="binding site" evidence="1">
    <location>
        <begin position="280"/>
        <end position="283"/>
    </location>
    <ligand>
        <name>substrate</name>
    </ligand>
</feature>
<feature type="binding site" evidence="1">
    <location>
        <position position="303"/>
    </location>
    <ligand>
        <name>substrate</name>
    </ligand>
</feature>
<feature type="binding site" evidence="1">
    <location>
        <begin position="308"/>
        <end position="309"/>
    </location>
    <ligand>
        <name>substrate</name>
    </ligand>
</feature>
<sequence length="328" mass="36292">MSEKIYEYKDENNWFIGKMTGHNLISGWGVKHTTIKKIDDLLDGIAATLDWENPKGYDVSVVRHQSPLSLITFIIDMINQETQREIKVTPHAGTILLMENAKLLAVYLPEGGVSTATFFATSEQGFGDIILIATRNEGKTKEFRNLFGQLGYRVENLNDYPELPEVAETGTTFEENARLKAETISRLTGKMVLADDSGLKVDALGGLPGVWSARFSGPDATDAKNNAKLLHELAMVFDQKKRSAQFHTTLVVAAPNKDSLVVEADWPGYIATQPKGENGFGYDPVFIVGETGHHAAELEADQKNQLSHRGQAVRKLMEVFPAWQAKQS</sequence>
<organism>
    <name type="scientific">Streptococcus pyogenes serotype M1</name>
    <dbReference type="NCBI Taxonomy" id="301447"/>
    <lineage>
        <taxon>Bacteria</taxon>
        <taxon>Bacillati</taxon>
        <taxon>Bacillota</taxon>
        <taxon>Bacilli</taxon>
        <taxon>Lactobacillales</taxon>
        <taxon>Streptococcaceae</taxon>
        <taxon>Streptococcus</taxon>
    </lineage>
</organism>
<protein>
    <recommendedName>
        <fullName evidence="1">dITP/XTP pyrophosphatase</fullName>
        <ecNumber evidence="1">3.6.1.66</ecNumber>
    </recommendedName>
    <alternativeName>
        <fullName evidence="1">Non-canonical purine NTP pyrophosphatase</fullName>
    </alternativeName>
    <alternativeName>
        <fullName evidence="1">Non-standard purine NTP pyrophosphatase</fullName>
    </alternativeName>
    <alternativeName>
        <fullName evidence="1">Nucleoside-triphosphate diphosphatase</fullName>
    </alternativeName>
    <alternativeName>
        <fullName evidence="1">Nucleoside-triphosphate pyrophosphatase</fullName>
        <shortName evidence="1">NTPase</shortName>
    </alternativeName>
</protein>
<dbReference type="EC" id="3.6.1.66" evidence="1"/>
<dbReference type="EMBL" id="AE004092">
    <property type="protein sequence ID" value="AAK33407.1"/>
    <property type="molecule type" value="Genomic_DNA"/>
</dbReference>
<dbReference type="EMBL" id="CP000017">
    <property type="protein sequence ID" value="AAZ50923.1"/>
    <property type="molecule type" value="Genomic_DNA"/>
</dbReference>
<dbReference type="RefSeq" id="NP_268686.1">
    <property type="nucleotide sequence ID" value="NC_002737.2"/>
</dbReference>
<dbReference type="SMR" id="Q9A1B6"/>
<dbReference type="PaxDb" id="1314-HKU360_00340"/>
<dbReference type="KEGG" id="spy:SPy_0362"/>
<dbReference type="KEGG" id="spz:M5005_Spy0304"/>
<dbReference type="PATRIC" id="fig|160490.10.peg.313"/>
<dbReference type="HOGENOM" id="CLU_863088_0_0_9"/>
<dbReference type="OMA" id="DNWFIGK"/>
<dbReference type="Proteomes" id="UP000000750">
    <property type="component" value="Chromosome"/>
</dbReference>
<dbReference type="GO" id="GO:0005829">
    <property type="term" value="C:cytosol"/>
    <property type="evidence" value="ECO:0007669"/>
    <property type="project" value="TreeGrafter"/>
</dbReference>
<dbReference type="GO" id="GO:0035870">
    <property type="term" value="F:dITP diphosphatase activity"/>
    <property type="evidence" value="ECO:0007669"/>
    <property type="project" value="RHEA"/>
</dbReference>
<dbReference type="GO" id="GO:0036220">
    <property type="term" value="F:ITP diphosphatase activity"/>
    <property type="evidence" value="ECO:0007669"/>
    <property type="project" value="UniProtKB-EC"/>
</dbReference>
<dbReference type="GO" id="GO:0046872">
    <property type="term" value="F:metal ion binding"/>
    <property type="evidence" value="ECO:0007669"/>
    <property type="project" value="UniProtKB-KW"/>
</dbReference>
<dbReference type="GO" id="GO:0000166">
    <property type="term" value="F:nucleotide binding"/>
    <property type="evidence" value="ECO:0007669"/>
    <property type="project" value="UniProtKB-KW"/>
</dbReference>
<dbReference type="GO" id="GO:0017111">
    <property type="term" value="F:ribonucleoside triphosphate phosphatase activity"/>
    <property type="evidence" value="ECO:0007669"/>
    <property type="project" value="InterPro"/>
</dbReference>
<dbReference type="GO" id="GO:0036222">
    <property type="term" value="F:XTP diphosphatase activity"/>
    <property type="evidence" value="ECO:0007669"/>
    <property type="project" value="RHEA"/>
</dbReference>
<dbReference type="GO" id="GO:0009117">
    <property type="term" value="P:nucleotide metabolic process"/>
    <property type="evidence" value="ECO:0007669"/>
    <property type="project" value="UniProtKB-KW"/>
</dbReference>
<dbReference type="GO" id="GO:0009146">
    <property type="term" value="P:purine nucleoside triphosphate catabolic process"/>
    <property type="evidence" value="ECO:0007669"/>
    <property type="project" value="UniProtKB-UniRule"/>
</dbReference>
<dbReference type="CDD" id="cd00515">
    <property type="entry name" value="HAM1"/>
    <property type="match status" value="1"/>
</dbReference>
<dbReference type="FunFam" id="3.90.950.10:FF:000001">
    <property type="entry name" value="dITP/XTP pyrophosphatase"/>
    <property type="match status" value="1"/>
</dbReference>
<dbReference type="Gene3D" id="3.90.950.10">
    <property type="match status" value="1"/>
</dbReference>
<dbReference type="HAMAP" id="MF_01405">
    <property type="entry name" value="Non_canon_purine_NTPase"/>
    <property type="match status" value="1"/>
</dbReference>
<dbReference type="InterPro" id="IPR020922">
    <property type="entry name" value="dITP/XTP_pyrophosphatase"/>
</dbReference>
<dbReference type="InterPro" id="IPR029001">
    <property type="entry name" value="ITPase-like_fam"/>
</dbReference>
<dbReference type="InterPro" id="IPR002637">
    <property type="entry name" value="RdgB/HAM1"/>
</dbReference>
<dbReference type="NCBIfam" id="NF002698">
    <property type="entry name" value="PRK02491.1"/>
    <property type="match status" value="1"/>
</dbReference>
<dbReference type="NCBIfam" id="NF011397">
    <property type="entry name" value="PRK14822.1"/>
    <property type="match status" value="1"/>
</dbReference>
<dbReference type="NCBIfam" id="TIGR00042">
    <property type="entry name" value="RdgB/HAM1 family non-canonical purine NTP pyrophosphatase"/>
    <property type="match status" value="1"/>
</dbReference>
<dbReference type="PANTHER" id="PTHR11067:SF9">
    <property type="entry name" value="INOSINE TRIPHOSPHATE PYROPHOSPHATASE"/>
    <property type="match status" value="1"/>
</dbReference>
<dbReference type="PANTHER" id="PTHR11067">
    <property type="entry name" value="INOSINE TRIPHOSPHATE PYROPHOSPHATASE/HAM1 PROTEIN"/>
    <property type="match status" value="1"/>
</dbReference>
<dbReference type="Pfam" id="PF01725">
    <property type="entry name" value="Ham1p_like"/>
    <property type="match status" value="1"/>
</dbReference>
<dbReference type="SUPFAM" id="SSF52972">
    <property type="entry name" value="ITPase-like"/>
    <property type="match status" value="1"/>
</dbReference>
<name>IXTPA_STRP1</name>
<gene>
    <name type="ordered locus">SPy_0362</name>
    <name type="ordered locus">M5005_Spy0304</name>
</gene>
<proteinExistence type="inferred from homology"/>
<keyword id="KW-0378">Hydrolase</keyword>
<keyword id="KW-0460">Magnesium</keyword>
<keyword id="KW-0479">Metal-binding</keyword>
<keyword id="KW-0546">Nucleotide metabolism</keyword>
<keyword id="KW-0547">Nucleotide-binding</keyword>
<keyword id="KW-1185">Reference proteome</keyword>
<reference key="1">
    <citation type="journal article" date="2001" name="Proc. Natl. Acad. Sci. U.S.A.">
        <title>Complete genome sequence of an M1 strain of Streptococcus pyogenes.</title>
        <authorList>
            <person name="Ferretti J.J."/>
            <person name="McShan W.M."/>
            <person name="Ajdic D.J."/>
            <person name="Savic D.J."/>
            <person name="Savic G."/>
            <person name="Lyon K."/>
            <person name="Primeaux C."/>
            <person name="Sezate S."/>
            <person name="Suvorov A.N."/>
            <person name="Kenton S."/>
            <person name="Lai H.S."/>
            <person name="Lin S.P."/>
            <person name="Qian Y."/>
            <person name="Jia H.G."/>
            <person name="Najar F.Z."/>
            <person name="Ren Q."/>
            <person name="Zhu H."/>
            <person name="Song L."/>
            <person name="White J."/>
            <person name="Yuan X."/>
            <person name="Clifton S.W."/>
            <person name="Roe B.A."/>
            <person name="McLaughlin R.E."/>
        </authorList>
    </citation>
    <scope>NUCLEOTIDE SEQUENCE [LARGE SCALE GENOMIC DNA]</scope>
    <source>
        <strain>ATCC 700294 / SF370 / Serotype M1</strain>
    </source>
</reference>
<reference key="2">
    <citation type="journal article" date="2005" name="J. Infect. Dis.">
        <title>Evolutionary origin and emergence of a highly successful clone of serotype M1 group A Streptococcus involved multiple horizontal gene transfer events.</title>
        <authorList>
            <person name="Sumby P."/>
            <person name="Porcella S.F."/>
            <person name="Madrigal A.G."/>
            <person name="Barbian K.D."/>
            <person name="Virtaneva K."/>
            <person name="Ricklefs S.M."/>
            <person name="Sturdevant D.E."/>
            <person name="Graham M.R."/>
            <person name="Vuopio-Varkila J."/>
            <person name="Hoe N.P."/>
            <person name="Musser J.M."/>
        </authorList>
    </citation>
    <scope>NUCLEOTIDE SEQUENCE [LARGE SCALE GENOMIC DNA]</scope>
    <source>
        <strain>ATCC BAA-947 / MGAS5005 / Serotype M1</strain>
    </source>
</reference>
<comment type="function">
    <text evidence="1">Pyrophosphatase that catalyzes the hydrolysis of nucleoside triphosphates to their monophosphate derivatives, with a high preference for the non-canonical purine nucleotides XTP (xanthosine triphosphate), dITP (deoxyinosine triphosphate) and ITP. Seems to function as a house-cleaning enzyme that removes non-canonical purine nucleotides from the nucleotide pool, thus preventing their incorporation into DNA/RNA and avoiding chromosomal lesions.</text>
</comment>
<comment type="catalytic activity">
    <reaction evidence="1">
        <text>XTP + H2O = XMP + diphosphate + H(+)</text>
        <dbReference type="Rhea" id="RHEA:28610"/>
        <dbReference type="ChEBI" id="CHEBI:15377"/>
        <dbReference type="ChEBI" id="CHEBI:15378"/>
        <dbReference type="ChEBI" id="CHEBI:33019"/>
        <dbReference type="ChEBI" id="CHEBI:57464"/>
        <dbReference type="ChEBI" id="CHEBI:61314"/>
        <dbReference type="EC" id="3.6.1.66"/>
    </reaction>
</comment>
<comment type="catalytic activity">
    <reaction evidence="1">
        <text>dITP + H2O = dIMP + diphosphate + H(+)</text>
        <dbReference type="Rhea" id="RHEA:28342"/>
        <dbReference type="ChEBI" id="CHEBI:15377"/>
        <dbReference type="ChEBI" id="CHEBI:15378"/>
        <dbReference type="ChEBI" id="CHEBI:33019"/>
        <dbReference type="ChEBI" id="CHEBI:61194"/>
        <dbReference type="ChEBI" id="CHEBI:61382"/>
        <dbReference type="EC" id="3.6.1.66"/>
    </reaction>
</comment>
<comment type="catalytic activity">
    <reaction evidence="1">
        <text>ITP + H2O = IMP + diphosphate + H(+)</text>
        <dbReference type="Rhea" id="RHEA:29399"/>
        <dbReference type="ChEBI" id="CHEBI:15377"/>
        <dbReference type="ChEBI" id="CHEBI:15378"/>
        <dbReference type="ChEBI" id="CHEBI:33019"/>
        <dbReference type="ChEBI" id="CHEBI:58053"/>
        <dbReference type="ChEBI" id="CHEBI:61402"/>
        <dbReference type="EC" id="3.6.1.66"/>
    </reaction>
</comment>
<comment type="cofactor">
    <cofactor evidence="1">
        <name>Mg(2+)</name>
        <dbReference type="ChEBI" id="CHEBI:18420"/>
    </cofactor>
    <text evidence="1">Binds 1 Mg(2+) ion per subunit.</text>
</comment>
<comment type="subunit">
    <text evidence="1">Homodimer.</text>
</comment>
<comment type="similarity">
    <text evidence="1 2">Belongs to the HAM1 NTPase family.</text>
</comment>
<evidence type="ECO:0000255" key="1">
    <source>
        <dbReference type="HAMAP-Rule" id="MF_01405"/>
    </source>
</evidence>
<evidence type="ECO:0000305" key="2"/>